<comment type="function">
    <text evidence="1">Catalyzes the cleavage of 5-oxoproline to form L-glutamate coupled to the hydrolysis of ATP to ADP and inorganic phosphate.</text>
</comment>
<comment type="catalytic activity">
    <reaction evidence="1">
        <text>5-oxo-L-proline + ATP + 2 H2O = L-glutamate + ADP + phosphate + H(+)</text>
        <dbReference type="Rhea" id="RHEA:10348"/>
        <dbReference type="ChEBI" id="CHEBI:15377"/>
        <dbReference type="ChEBI" id="CHEBI:15378"/>
        <dbReference type="ChEBI" id="CHEBI:29985"/>
        <dbReference type="ChEBI" id="CHEBI:30616"/>
        <dbReference type="ChEBI" id="CHEBI:43474"/>
        <dbReference type="ChEBI" id="CHEBI:58402"/>
        <dbReference type="ChEBI" id="CHEBI:456216"/>
        <dbReference type="EC" id="3.5.2.9"/>
    </reaction>
</comment>
<comment type="subunit">
    <text evidence="1">Forms a complex composed of PxpA, PxpB and PxpC.</text>
</comment>
<comment type="similarity">
    <text evidence="1">Belongs to the LamB/PxpA family.</text>
</comment>
<organism>
    <name type="scientific">Pseudomonas putida (strain ATCC 47054 / DSM 6125 / CFBP 8728 / NCIMB 11950 / KT2440)</name>
    <dbReference type="NCBI Taxonomy" id="160488"/>
    <lineage>
        <taxon>Bacteria</taxon>
        <taxon>Pseudomonadati</taxon>
        <taxon>Pseudomonadota</taxon>
        <taxon>Gammaproteobacteria</taxon>
        <taxon>Pseudomonadales</taxon>
        <taxon>Pseudomonadaceae</taxon>
        <taxon>Pseudomonas</taxon>
    </lineage>
</organism>
<accession>Q88E89</accession>
<protein>
    <recommendedName>
        <fullName evidence="1">5-oxoprolinase subunit A 2</fullName>
        <shortName evidence="1">5-OPase subunit A 2</shortName>
        <ecNumber evidence="1">3.5.2.9</ecNumber>
    </recommendedName>
    <alternativeName>
        <fullName evidence="1">5-oxoprolinase (ATP-hydrolyzing) subunit A 2</fullName>
    </alternativeName>
</protein>
<sequence length="258" mass="27871">MHNDKGDRVVERLLLNCDMGESFGSWRMGLDAEVMPYIDCANIACGYHAGDPGIMRRTVTLALEHGVTIGAHPAYPDLVGFGRRSMACSPEEIRDLLHYQIGALDGICKVLGGRVAYVKPHGALYNDMMADPLKLRTVLEAVAAYDSNLPLMLMATADNRAAQALGDEIGVPLWFEAFADRAYTASGHLLSRRLPGAVHHDPARVVEQAVRLARGETLLADDGSALQLAARTLCVHGDNDSSVAAVRQIRQALDGLEV</sequence>
<name>PXPA2_PSEPK</name>
<feature type="chain" id="PRO_0000185030" description="5-oxoprolinase subunit A 2">
    <location>
        <begin position="1"/>
        <end position="258"/>
    </location>
</feature>
<proteinExistence type="inferred from homology"/>
<keyword id="KW-0067">ATP-binding</keyword>
<keyword id="KW-0378">Hydrolase</keyword>
<keyword id="KW-0547">Nucleotide-binding</keyword>
<keyword id="KW-1185">Reference proteome</keyword>
<gene>
    <name evidence="1" type="primary">pxpA2</name>
    <name type="ordered locus">PP_4577</name>
</gene>
<reference key="1">
    <citation type="journal article" date="2002" name="Environ. Microbiol.">
        <title>Complete genome sequence and comparative analysis of the metabolically versatile Pseudomonas putida KT2440.</title>
        <authorList>
            <person name="Nelson K.E."/>
            <person name="Weinel C."/>
            <person name="Paulsen I.T."/>
            <person name="Dodson R.J."/>
            <person name="Hilbert H."/>
            <person name="Martins dos Santos V.A.P."/>
            <person name="Fouts D.E."/>
            <person name="Gill S.R."/>
            <person name="Pop M."/>
            <person name="Holmes M."/>
            <person name="Brinkac L.M."/>
            <person name="Beanan M.J."/>
            <person name="DeBoy R.T."/>
            <person name="Daugherty S.C."/>
            <person name="Kolonay J.F."/>
            <person name="Madupu R."/>
            <person name="Nelson W.C."/>
            <person name="White O."/>
            <person name="Peterson J.D."/>
            <person name="Khouri H.M."/>
            <person name="Hance I."/>
            <person name="Chris Lee P."/>
            <person name="Holtzapple E.K."/>
            <person name="Scanlan D."/>
            <person name="Tran K."/>
            <person name="Moazzez A."/>
            <person name="Utterback T.R."/>
            <person name="Rizzo M."/>
            <person name="Lee K."/>
            <person name="Kosack D."/>
            <person name="Moestl D."/>
            <person name="Wedler H."/>
            <person name="Lauber J."/>
            <person name="Stjepandic D."/>
            <person name="Hoheisel J."/>
            <person name="Straetz M."/>
            <person name="Heim S."/>
            <person name="Kiewitz C."/>
            <person name="Eisen J.A."/>
            <person name="Timmis K.N."/>
            <person name="Duesterhoeft A."/>
            <person name="Tuemmler B."/>
            <person name="Fraser C.M."/>
        </authorList>
    </citation>
    <scope>NUCLEOTIDE SEQUENCE [LARGE SCALE GENOMIC DNA]</scope>
    <source>
        <strain>ATCC 47054 / DSM 6125 / CFBP 8728 / NCIMB 11950 / KT2440</strain>
    </source>
</reference>
<evidence type="ECO:0000255" key="1">
    <source>
        <dbReference type="HAMAP-Rule" id="MF_00691"/>
    </source>
</evidence>
<dbReference type="EC" id="3.5.2.9" evidence="1"/>
<dbReference type="EMBL" id="AE015451">
    <property type="protein sequence ID" value="AAN70150.1"/>
    <property type="molecule type" value="Genomic_DNA"/>
</dbReference>
<dbReference type="RefSeq" id="NP_746686.1">
    <property type="nucleotide sequence ID" value="NC_002947.4"/>
</dbReference>
<dbReference type="RefSeq" id="WP_010955246.1">
    <property type="nucleotide sequence ID" value="NZ_CP169744.1"/>
</dbReference>
<dbReference type="SMR" id="Q88E89"/>
<dbReference type="STRING" id="160488.PP_4577"/>
<dbReference type="PaxDb" id="160488-PP_4577"/>
<dbReference type="KEGG" id="ppu:PP_4577"/>
<dbReference type="PATRIC" id="fig|160488.4.peg.4880"/>
<dbReference type="eggNOG" id="COG1540">
    <property type="taxonomic scope" value="Bacteria"/>
</dbReference>
<dbReference type="HOGENOM" id="CLU_069535_0_0_6"/>
<dbReference type="OrthoDB" id="9773478at2"/>
<dbReference type="PhylomeDB" id="Q88E89"/>
<dbReference type="BioCyc" id="PPUT160488:G1G01-4885-MONOMER"/>
<dbReference type="Proteomes" id="UP000000556">
    <property type="component" value="Chromosome"/>
</dbReference>
<dbReference type="GO" id="GO:0017168">
    <property type="term" value="F:5-oxoprolinase (ATP-hydrolyzing) activity"/>
    <property type="evidence" value="ECO:0007669"/>
    <property type="project" value="UniProtKB-UniRule"/>
</dbReference>
<dbReference type="GO" id="GO:0005524">
    <property type="term" value="F:ATP binding"/>
    <property type="evidence" value="ECO:0007669"/>
    <property type="project" value="UniProtKB-UniRule"/>
</dbReference>
<dbReference type="GO" id="GO:0005975">
    <property type="term" value="P:carbohydrate metabolic process"/>
    <property type="evidence" value="ECO:0007669"/>
    <property type="project" value="InterPro"/>
</dbReference>
<dbReference type="CDD" id="cd10787">
    <property type="entry name" value="LamB_YcsF_like"/>
    <property type="match status" value="1"/>
</dbReference>
<dbReference type="Gene3D" id="3.20.20.370">
    <property type="entry name" value="Glycoside hydrolase/deacetylase"/>
    <property type="match status" value="1"/>
</dbReference>
<dbReference type="HAMAP" id="MF_00691">
    <property type="entry name" value="PxpA"/>
    <property type="match status" value="1"/>
</dbReference>
<dbReference type="InterPro" id="IPR011330">
    <property type="entry name" value="Glyco_hydro/deAcase_b/a-brl"/>
</dbReference>
<dbReference type="InterPro" id="IPR005501">
    <property type="entry name" value="LamB/YcsF/PxpA-like"/>
</dbReference>
<dbReference type="NCBIfam" id="NF003814">
    <property type="entry name" value="PRK05406.1-3"/>
    <property type="match status" value="1"/>
</dbReference>
<dbReference type="NCBIfam" id="NF003816">
    <property type="entry name" value="PRK05406.1-5"/>
    <property type="match status" value="1"/>
</dbReference>
<dbReference type="PANTHER" id="PTHR30292:SF0">
    <property type="entry name" value="5-OXOPROLINASE SUBUNIT A"/>
    <property type="match status" value="1"/>
</dbReference>
<dbReference type="PANTHER" id="PTHR30292">
    <property type="entry name" value="UNCHARACTERIZED PROTEIN YBGL-RELATED"/>
    <property type="match status" value="1"/>
</dbReference>
<dbReference type="Pfam" id="PF03746">
    <property type="entry name" value="LamB_YcsF"/>
    <property type="match status" value="1"/>
</dbReference>
<dbReference type="SUPFAM" id="SSF88713">
    <property type="entry name" value="Glycoside hydrolase/deacetylase"/>
    <property type="match status" value="1"/>
</dbReference>